<name>DNAJ_LEGPL</name>
<protein>
    <recommendedName>
        <fullName evidence="1">Chaperone protein DnaJ</fullName>
    </recommendedName>
</protein>
<accession>Q5WV16</accession>
<organism>
    <name type="scientific">Legionella pneumophila (strain Lens)</name>
    <dbReference type="NCBI Taxonomy" id="297245"/>
    <lineage>
        <taxon>Bacteria</taxon>
        <taxon>Pseudomonadati</taxon>
        <taxon>Pseudomonadota</taxon>
        <taxon>Gammaproteobacteria</taxon>
        <taxon>Legionellales</taxon>
        <taxon>Legionellaceae</taxon>
        <taxon>Legionella</taxon>
    </lineage>
</organism>
<comment type="function">
    <text evidence="1">Participates actively in the response to hyperosmotic and heat shock by preventing the aggregation of stress-denatured proteins and by disaggregating proteins, also in an autonomous, DnaK-independent fashion. Unfolded proteins bind initially to DnaJ; upon interaction with the DnaJ-bound protein, DnaK hydrolyzes its bound ATP, resulting in the formation of a stable complex. GrpE releases ADP from DnaK; ATP binding to DnaK triggers the release of the substrate protein, thus completing the reaction cycle. Several rounds of ATP-dependent interactions between DnaJ, DnaK and GrpE are required for fully efficient folding. Also involved, together with DnaK and GrpE, in the DNA replication of plasmids through activation of initiation proteins.</text>
</comment>
<comment type="cofactor">
    <cofactor evidence="1">
        <name>Zn(2+)</name>
        <dbReference type="ChEBI" id="CHEBI:29105"/>
    </cofactor>
    <text evidence="1">Binds 2 Zn(2+) ions per monomer.</text>
</comment>
<comment type="subunit">
    <text evidence="1">Homodimer.</text>
</comment>
<comment type="subcellular location">
    <subcellularLocation>
        <location evidence="1">Cytoplasm</location>
    </subcellularLocation>
</comment>
<comment type="domain">
    <text evidence="1">The J domain is necessary and sufficient to stimulate DnaK ATPase activity. Zinc center 1 plays an important role in the autonomous, DnaK-independent chaperone activity of DnaJ. Zinc center 2 is essential for interaction with DnaK and for DnaJ activity.</text>
</comment>
<comment type="similarity">
    <text evidence="1">Belongs to the DnaJ family.</text>
</comment>
<reference key="1">
    <citation type="journal article" date="2004" name="Nat. Genet.">
        <title>Evidence in the Legionella pneumophila genome for exploitation of host cell functions and high genome plasticity.</title>
        <authorList>
            <person name="Cazalet C."/>
            <person name="Rusniok C."/>
            <person name="Brueggemann H."/>
            <person name="Zidane N."/>
            <person name="Magnier A."/>
            <person name="Ma L."/>
            <person name="Tichit M."/>
            <person name="Jarraud S."/>
            <person name="Bouchier C."/>
            <person name="Vandenesch F."/>
            <person name="Kunst F."/>
            <person name="Etienne J."/>
            <person name="Glaser P."/>
            <person name="Buchrieser C."/>
        </authorList>
    </citation>
    <scope>NUCLEOTIDE SEQUENCE [LARGE SCALE GENOMIC DNA]</scope>
    <source>
        <strain>Lens</strain>
    </source>
</reference>
<feature type="chain" id="PRO_0000070808" description="Chaperone protein DnaJ">
    <location>
        <begin position="1"/>
        <end position="379"/>
    </location>
</feature>
<feature type="domain" description="J" evidence="1">
    <location>
        <begin position="5"/>
        <end position="70"/>
    </location>
</feature>
<feature type="repeat" description="CXXCXGXG motif">
    <location>
        <begin position="148"/>
        <end position="155"/>
    </location>
</feature>
<feature type="repeat" description="CXXCXGXG motif">
    <location>
        <begin position="165"/>
        <end position="172"/>
    </location>
</feature>
<feature type="repeat" description="CXXCXGXG motif">
    <location>
        <begin position="187"/>
        <end position="194"/>
    </location>
</feature>
<feature type="repeat" description="CXXCXGXG motif">
    <location>
        <begin position="201"/>
        <end position="208"/>
    </location>
</feature>
<feature type="zinc finger region" description="CR-type" evidence="1">
    <location>
        <begin position="135"/>
        <end position="213"/>
    </location>
</feature>
<feature type="binding site" evidence="1">
    <location>
        <position position="148"/>
    </location>
    <ligand>
        <name>Zn(2+)</name>
        <dbReference type="ChEBI" id="CHEBI:29105"/>
        <label>1</label>
    </ligand>
</feature>
<feature type="binding site" evidence="1">
    <location>
        <position position="151"/>
    </location>
    <ligand>
        <name>Zn(2+)</name>
        <dbReference type="ChEBI" id="CHEBI:29105"/>
        <label>1</label>
    </ligand>
</feature>
<feature type="binding site" evidence="1">
    <location>
        <position position="165"/>
    </location>
    <ligand>
        <name>Zn(2+)</name>
        <dbReference type="ChEBI" id="CHEBI:29105"/>
        <label>2</label>
    </ligand>
</feature>
<feature type="binding site" evidence="1">
    <location>
        <position position="168"/>
    </location>
    <ligand>
        <name>Zn(2+)</name>
        <dbReference type="ChEBI" id="CHEBI:29105"/>
        <label>2</label>
    </ligand>
</feature>
<feature type="binding site" evidence="1">
    <location>
        <position position="187"/>
    </location>
    <ligand>
        <name>Zn(2+)</name>
        <dbReference type="ChEBI" id="CHEBI:29105"/>
        <label>2</label>
    </ligand>
</feature>
<feature type="binding site" evidence="1">
    <location>
        <position position="190"/>
    </location>
    <ligand>
        <name>Zn(2+)</name>
        <dbReference type="ChEBI" id="CHEBI:29105"/>
        <label>2</label>
    </ligand>
</feature>
<feature type="binding site" evidence="1">
    <location>
        <position position="201"/>
    </location>
    <ligand>
        <name>Zn(2+)</name>
        <dbReference type="ChEBI" id="CHEBI:29105"/>
        <label>1</label>
    </ligand>
</feature>
<feature type="binding site" evidence="1">
    <location>
        <position position="204"/>
    </location>
    <ligand>
        <name>Zn(2+)</name>
        <dbReference type="ChEBI" id="CHEBI:29105"/>
        <label>1</label>
    </ligand>
</feature>
<gene>
    <name evidence="1" type="primary">dnaJ</name>
    <name type="ordered locus">lpl2001</name>
</gene>
<sequence length="379" mass="41271">MEQRDYYELLEVSRNASDAEIKKAYRRLAMKYHPDRNPGDTSAEEKFKEIQKAYNILSDKQKRAAYDQFGHAGVDPSMGGGPGGFGGFGGFGDVFEDIFENIFSGGRGQGRQSRGQRGADLQFNVQLTLEEAAIGKEVEITVPRHGTCTVCEGSGAKKGTSPKTCETCQGMGQVRIQQGFFSIQQTCPTCHGEGKIISDPCASCHGQGRVRESKKINVKIPAGVDNGDRVRLSGEGEAGVHGGGSGDLYVQISLKKHAIFERHENDLHCEVPISFATAALGGSIEVPTLEGRVTLKIPAETQTGKVFRLRSKGMKSVRGYGQGDLLCKVVVETPVNLSREQKELLNKLQDSLENAKGTHSPKTSSWFAGVKKFFEDMKF</sequence>
<dbReference type="EMBL" id="CR628337">
    <property type="protein sequence ID" value="CAH16241.1"/>
    <property type="molecule type" value="Genomic_DNA"/>
</dbReference>
<dbReference type="RefSeq" id="WP_011215984.1">
    <property type="nucleotide sequence ID" value="NC_006369.1"/>
</dbReference>
<dbReference type="SMR" id="Q5WV16"/>
<dbReference type="KEGG" id="lpf:lpl2001"/>
<dbReference type="LegioList" id="lpl2001"/>
<dbReference type="HOGENOM" id="CLU_017633_0_7_6"/>
<dbReference type="Proteomes" id="UP000002517">
    <property type="component" value="Chromosome"/>
</dbReference>
<dbReference type="GO" id="GO:0005737">
    <property type="term" value="C:cytoplasm"/>
    <property type="evidence" value="ECO:0007669"/>
    <property type="project" value="UniProtKB-SubCell"/>
</dbReference>
<dbReference type="GO" id="GO:0005524">
    <property type="term" value="F:ATP binding"/>
    <property type="evidence" value="ECO:0007669"/>
    <property type="project" value="InterPro"/>
</dbReference>
<dbReference type="GO" id="GO:0031072">
    <property type="term" value="F:heat shock protein binding"/>
    <property type="evidence" value="ECO:0007669"/>
    <property type="project" value="InterPro"/>
</dbReference>
<dbReference type="GO" id="GO:0051082">
    <property type="term" value="F:unfolded protein binding"/>
    <property type="evidence" value="ECO:0007669"/>
    <property type="project" value="UniProtKB-UniRule"/>
</dbReference>
<dbReference type="GO" id="GO:0008270">
    <property type="term" value="F:zinc ion binding"/>
    <property type="evidence" value="ECO:0007669"/>
    <property type="project" value="UniProtKB-UniRule"/>
</dbReference>
<dbReference type="GO" id="GO:0051085">
    <property type="term" value="P:chaperone cofactor-dependent protein refolding"/>
    <property type="evidence" value="ECO:0007669"/>
    <property type="project" value="TreeGrafter"/>
</dbReference>
<dbReference type="GO" id="GO:0006260">
    <property type="term" value="P:DNA replication"/>
    <property type="evidence" value="ECO:0007669"/>
    <property type="project" value="UniProtKB-KW"/>
</dbReference>
<dbReference type="GO" id="GO:0042026">
    <property type="term" value="P:protein refolding"/>
    <property type="evidence" value="ECO:0007669"/>
    <property type="project" value="TreeGrafter"/>
</dbReference>
<dbReference type="GO" id="GO:0009408">
    <property type="term" value="P:response to heat"/>
    <property type="evidence" value="ECO:0007669"/>
    <property type="project" value="InterPro"/>
</dbReference>
<dbReference type="CDD" id="cd06257">
    <property type="entry name" value="DnaJ"/>
    <property type="match status" value="1"/>
</dbReference>
<dbReference type="CDD" id="cd10747">
    <property type="entry name" value="DnaJ_C"/>
    <property type="match status" value="1"/>
</dbReference>
<dbReference type="CDD" id="cd10719">
    <property type="entry name" value="DnaJ_zf"/>
    <property type="match status" value="1"/>
</dbReference>
<dbReference type="FunFam" id="1.10.287.110:FF:000034">
    <property type="entry name" value="Chaperone protein DnaJ"/>
    <property type="match status" value="1"/>
</dbReference>
<dbReference type="FunFam" id="2.10.230.10:FF:000002">
    <property type="entry name" value="Molecular chaperone DnaJ"/>
    <property type="match status" value="1"/>
</dbReference>
<dbReference type="FunFam" id="2.60.260.20:FF:000004">
    <property type="entry name" value="Molecular chaperone DnaJ"/>
    <property type="match status" value="1"/>
</dbReference>
<dbReference type="Gene3D" id="1.10.287.110">
    <property type="entry name" value="DnaJ domain"/>
    <property type="match status" value="1"/>
</dbReference>
<dbReference type="Gene3D" id="2.10.230.10">
    <property type="entry name" value="Heat shock protein DnaJ, cysteine-rich domain"/>
    <property type="match status" value="1"/>
</dbReference>
<dbReference type="Gene3D" id="2.60.260.20">
    <property type="entry name" value="Urease metallochaperone UreE, N-terminal domain"/>
    <property type="match status" value="2"/>
</dbReference>
<dbReference type="HAMAP" id="MF_01152">
    <property type="entry name" value="DnaJ"/>
    <property type="match status" value="1"/>
</dbReference>
<dbReference type="InterPro" id="IPR012724">
    <property type="entry name" value="DnaJ"/>
</dbReference>
<dbReference type="InterPro" id="IPR002939">
    <property type="entry name" value="DnaJ_C"/>
</dbReference>
<dbReference type="InterPro" id="IPR001623">
    <property type="entry name" value="DnaJ_domain"/>
</dbReference>
<dbReference type="InterPro" id="IPR018253">
    <property type="entry name" value="DnaJ_domain_CS"/>
</dbReference>
<dbReference type="InterPro" id="IPR008971">
    <property type="entry name" value="HSP40/DnaJ_pept-bd"/>
</dbReference>
<dbReference type="InterPro" id="IPR001305">
    <property type="entry name" value="HSP_DnaJ_Cys-rich_dom"/>
</dbReference>
<dbReference type="InterPro" id="IPR036410">
    <property type="entry name" value="HSP_DnaJ_Cys-rich_dom_sf"/>
</dbReference>
<dbReference type="InterPro" id="IPR036869">
    <property type="entry name" value="J_dom_sf"/>
</dbReference>
<dbReference type="NCBIfam" id="TIGR02349">
    <property type="entry name" value="DnaJ_bact"/>
    <property type="match status" value="1"/>
</dbReference>
<dbReference type="NCBIfam" id="NF008035">
    <property type="entry name" value="PRK10767.1"/>
    <property type="match status" value="1"/>
</dbReference>
<dbReference type="PANTHER" id="PTHR43096:SF48">
    <property type="entry name" value="CHAPERONE PROTEIN DNAJ"/>
    <property type="match status" value="1"/>
</dbReference>
<dbReference type="PANTHER" id="PTHR43096">
    <property type="entry name" value="DNAJ HOMOLOG 1, MITOCHONDRIAL-RELATED"/>
    <property type="match status" value="1"/>
</dbReference>
<dbReference type="Pfam" id="PF00226">
    <property type="entry name" value="DnaJ"/>
    <property type="match status" value="1"/>
</dbReference>
<dbReference type="Pfam" id="PF01556">
    <property type="entry name" value="DnaJ_C"/>
    <property type="match status" value="1"/>
</dbReference>
<dbReference type="Pfam" id="PF00684">
    <property type="entry name" value="DnaJ_CXXCXGXG"/>
    <property type="match status" value="1"/>
</dbReference>
<dbReference type="PRINTS" id="PR00625">
    <property type="entry name" value="JDOMAIN"/>
</dbReference>
<dbReference type="SMART" id="SM00271">
    <property type="entry name" value="DnaJ"/>
    <property type="match status" value="1"/>
</dbReference>
<dbReference type="SUPFAM" id="SSF46565">
    <property type="entry name" value="Chaperone J-domain"/>
    <property type="match status" value="1"/>
</dbReference>
<dbReference type="SUPFAM" id="SSF57938">
    <property type="entry name" value="DnaJ/Hsp40 cysteine-rich domain"/>
    <property type="match status" value="1"/>
</dbReference>
<dbReference type="SUPFAM" id="SSF49493">
    <property type="entry name" value="HSP40/DnaJ peptide-binding domain"/>
    <property type="match status" value="2"/>
</dbReference>
<dbReference type="PROSITE" id="PS00636">
    <property type="entry name" value="DNAJ_1"/>
    <property type="match status" value="1"/>
</dbReference>
<dbReference type="PROSITE" id="PS50076">
    <property type="entry name" value="DNAJ_2"/>
    <property type="match status" value="1"/>
</dbReference>
<dbReference type="PROSITE" id="PS51188">
    <property type="entry name" value="ZF_CR"/>
    <property type="match status" value="1"/>
</dbReference>
<proteinExistence type="inferred from homology"/>
<keyword id="KW-0143">Chaperone</keyword>
<keyword id="KW-0963">Cytoplasm</keyword>
<keyword id="KW-0235">DNA replication</keyword>
<keyword id="KW-0479">Metal-binding</keyword>
<keyword id="KW-0677">Repeat</keyword>
<keyword id="KW-0346">Stress response</keyword>
<keyword id="KW-0862">Zinc</keyword>
<keyword id="KW-0863">Zinc-finger</keyword>
<evidence type="ECO:0000255" key="1">
    <source>
        <dbReference type="HAMAP-Rule" id="MF_01152"/>
    </source>
</evidence>